<organism>
    <name type="scientific">Homo sapiens</name>
    <name type="common">Human</name>
    <dbReference type="NCBI Taxonomy" id="9606"/>
    <lineage>
        <taxon>Eukaryota</taxon>
        <taxon>Metazoa</taxon>
        <taxon>Chordata</taxon>
        <taxon>Craniata</taxon>
        <taxon>Vertebrata</taxon>
        <taxon>Euteleostomi</taxon>
        <taxon>Mammalia</taxon>
        <taxon>Eutheria</taxon>
        <taxon>Euarchontoglires</taxon>
        <taxon>Primates</taxon>
        <taxon>Haplorrhini</taxon>
        <taxon>Catarrhini</taxon>
        <taxon>Hominidae</taxon>
        <taxon>Homo</taxon>
    </lineage>
</organism>
<gene>
    <name type="primary">GAGE12J</name>
</gene>
<protein>
    <recommendedName>
        <fullName>G antigen 12J</fullName>
        <shortName>GAGE-12J</shortName>
    </recommendedName>
</protein>
<name>GG12J_HUMAN</name>
<accession>A6NER3</accession>
<comment type="miscellaneous">
    <text>This gene belongs to a multigene family expressed in a large variety of tumors whereas in normal tissues, expression is restricted to germ cells. These genes organized in clustered repeats, have a high degree of predicted sequence identity, but differ by scattered single nucleotide substitution. Their sequences contain either the antigenic peptide YYWPRPRRY or YRPRPRRY which is recognized by cytotoxic T-cells.</text>
</comment>
<comment type="similarity">
    <text evidence="2">Belongs to the GAGE family.</text>
</comment>
<comment type="caution">
    <text evidence="2">The first GAGE nomenclature was based on identified mRNA sequences, but the high identity of the GAGE members made impossible to separate products of paralogous genes from polymorph products. PubMed:18179644 presented a new GAGE gene nomenclature based on the identified genes and their products.</text>
</comment>
<reference key="1">
    <citation type="journal article" date="2005" name="Nature">
        <title>The DNA sequence of the human X chromosome.</title>
        <authorList>
            <person name="Ross M.T."/>
            <person name="Grafham D.V."/>
            <person name="Coffey A.J."/>
            <person name="Scherer S."/>
            <person name="McLay K."/>
            <person name="Muzny D."/>
            <person name="Platzer M."/>
            <person name="Howell G.R."/>
            <person name="Burrows C."/>
            <person name="Bird C.P."/>
            <person name="Frankish A."/>
            <person name="Lovell F.L."/>
            <person name="Howe K.L."/>
            <person name="Ashurst J.L."/>
            <person name="Fulton R.S."/>
            <person name="Sudbrak R."/>
            <person name="Wen G."/>
            <person name="Jones M.C."/>
            <person name="Hurles M.E."/>
            <person name="Andrews T.D."/>
            <person name="Scott C.E."/>
            <person name="Searle S."/>
            <person name="Ramser J."/>
            <person name="Whittaker A."/>
            <person name="Deadman R."/>
            <person name="Carter N.P."/>
            <person name="Hunt S.E."/>
            <person name="Chen R."/>
            <person name="Cree A."/>
            <person name="Gunaratne P."/>
            <person name="Havlak P."/>
            <person name="Hodgson A."/>
            <person name="Metzker M.L."/>
            <person name="Richards S."/>
            <person name="Scott G."/>
            <person name="Steffen D."/>
            <person name="Sodergren E."/>
            <person name="Wheeler D.A."/>
            <person name="Worley K.C."/>
            <person name="Ainscough R."/>
            <person name="Ambrose K.D."/>
            <person name="Ansari-Lari M.A."/>
            <person name="Aradhya S."/>
            <person name="Ashwell R.I."/>
            <person name="Babbage A.K."/>
            <person name="Bagguley C.L."/>
            <person name="Ballabio A."/>
            <person name="Banerjee R."/>
            <person name="Barker G.E."/>
            <person name="Barlow K.F."/>
            <person name="Barrett I.P."/>
            <person name="Bates K.N."/>
            <person name="Beare D.M."/>
            <person name="Beasley H."/>
            <person name="Beasley O."/>
            <person name="Beck A."/>
            <person name="Bethel G."/>
            <person name="Blechschmidt K."/>
            <person name="Brady N."/>
            <person name="Bray-Allen S."/>
            <person name="Bridgeman A.M."/>
            <person name="Brown A.J."/>
            <person name="Brown M.J."/>
            <person name="Bonnin D."/>
            <person name="Bruford E.A."/>
            <person name="Buhay C."/>
            <person name="Burch P."/>
            <person name="Burford D."/>
            <person name="Burgess J."/>
            <person name="Burrill W."/>
            <person name="Burton J."/>
            <person name="Bye J.M."/>
            <person name="Carder C."/>
            <person name="Carrel L."/>
            <person name="Chako J."/>
            <person name="Chapman J.C."/>
            <person name="Chavez D."/>
            <person name="Chen E."/>
            <person name="Chen G."/>
            <person name="Chen Y."/>
            <person name="Chen Z."/>
            <person name="Chinault C."/>
            <person name="Ciccodicola A."/>
            <person name="Clark S.Y."/>
            <person name="Clarke G."/>
            <person name="Clee C.M."/>
            <person name="Clegg S."/>
            <person name="Clerc-Blankenburg K."/>
            <person name="Clifford K."/>
            <person name="Cobley V."/>
            <person name="Cole C.G."/>
            <person name="Conquer J.S."/>
            <person name="Corby N."/>
            <person name="Connor R.E."/>
            <person name="David R."/>
            <person name="Davies J."/>
            <person name="Davis C."/>
            <person name="Davis J."/>
            <person name="Delgado O."/>
            <person name="Deshazo D."/>
            <person name="Dhami P."/>
            <person name="Ding Y."/>
            <person name="Dinh H."/>
            <person name="Dodsworth S."/>
            <person name="Draper H."/>
            <person name="Dugan-Rocha S."/>
            <person name="Dunham A."/>
            <person name="Dunn M."/>
            <person name="Durbin K.J."/>
            <person name="Dutta I."/>
            <person name="Eades T."/>
            <person name="Ellwood M."/>
            <person name="Emery-Cohen A."/>
            <person name="Errington H."/>
            <person name="Evans K.L."/>
            <person name="Faulkner L."/>
            <person name="Francis F."/>
            <person name="Frankland J."/>
            <person name="Fraser A.E."/>
            <person name="Galgoczy P."/>
            <person name="Gilbert J."/>
            <person name="Gill R."/>
            <person name="Gloeckner G."/>
            <person name="Gregory S.G."/>
            <person name="Gribble S."/>
            <person name="Griffiths C."/>
            <person name="Grocock R."/>
            <person name="Gu Y."/>
            <person name="Gwilliam R."/>
            <person name="Hamilton C."/>
            <person name="Hart E.A."/>
            <person name="Hawes A."/>
            <person name="Heath P.D."/>
            <person name="Heitmann K."/>
            <person name="Hennig S."/>
            <person name="Hernandez J."/>
            <person name="Hinzmann B."/>
            <person name="Ho S."/>
            <person name="Hoffs M."/>
            <person name="Howden P.J."/>
            <person name="Huckle E.J."/>
            <person name="Hume J."/>
            <person name="Hunt P.J."/>
            <person name="Hunt A.R."/>
            <person name="Isherwood J."/>
            <person name="Jacob L."/>
            <person name="Johnson D."/>
            <person name="Jones S."/>
            <person name="de Jong P.J."/>
            <person name="Joseph S.S."/>
            <person name="Keenan S."/>
            <person name="Kelly S."/>
            <person name="Kershaw J.K."/>
            <person name="Khan Z."/>
            <person name="Kioschis P."/>
            <person name="Klages S."/>
            <person name="Knights A.J."/>
            <person name="Kosiura A."/>
            <person name="Kovar-Smith C."/>
            <person name="Laird G.K."/>
            <person name="Langford C."/>
            <person name="Lawlor S."/>
            <person name="Leversha M."/>
            <person name="Lewis L."/>
            <person name="Liu W."/>
            <person name="Lloyd C."/>
            <person name="Lloyd D.M."/>
            <person name="Loulseged H."/>
            <person name="Loveland J.E."/>
            <person name="Lovell J.D."/>
            <person name="Lozado R."/>
            <person name="Lu J."/>
            <person name="Lyne R."/>
            <person name="Ma J."/>
            <person name="Maheshwari M."/>
            <person name="Matthews L.H."/>
            <person name="McDowall J."/>
            <person name="McLaren S."/>
            <person name="McMurray A."/>
            <person name="Meidl P."/>
            <person name="Meitinger T."/>
            <person name="Milne S."/>
            <person name="Miner G."/>
            <person name="Mistry S.L."/>
            <person name="Morgan M."/>
            <person name="Morris S."/>
            <person name="Mueller I."/>
            <person name="Mullikin J.C."/>
            <person name="Nguyen N."/>
            <person name="Nordsiek G."/>
            <person name="Nyakatura G."/>
            <person name="O'dell C.N."/>
            <person name="Okwuonu G."/>
            <person name="Palmer S."/>
            <person name="Pandian R."/>
            <person name="Parker D."/>
            <person name="Parrish J."/>
            <person name="Pasternak S."/>
            <person name="Patel D."/>
            <person name="Pearce A.V."/>
            <person name="Pearson D.M."/>
            <person name="Pelan S.E."/>
            <person name="Perez L."/>
            <person name="Porter K.M."/>
            <person name="Ramsey Y."/>
            <person name="Reichwald K."/>
            <person name="Rhodes S."/>
            <person name="Ridler K.A."/>
            <person name="Schlessinger D."/>
            <person name="Schueler M.G."/>
            <person name="Sehra H.K."/>
            <person name="Shaw-Smith C."/>
            <person name="Shen H."/>
            <person name="Sheridan E.M."/>
            <person name="Shownkeen R."/>
            <person name="Skuce C.D."/>
            <person name="Smith M.L."/>
            <person name="Sotheran E.C."/>
            <person name="Steingruber H.E."/>
            <person name="Steward C.A."/>
            <person name="Storey R."/>
            <person name="Swann R.M."/>
            <person name="Swarbreck D."/>
            <person name="Tabor P.E."/>
            <person name="Taudien S."/>
            <person name="Taylor T."/>
            <person name="Teague B."/>
            <person name="Thomas K."/>
            <person name="Thorpe A."/>
            <person name="Timms K."/>
            <person name="Tracey A."/>
            <person name="Trevanion S."/>
            <person name="Tromans A.C."/>
            <person name="d'Urso M."/>
            <person name="Verduzco D."/>
            <person name="Villasana D."/>
            <person name="Waldron L."/>
            <person name="Wall M."/>
            <person name="Wang Q."/>
            <person name="Warren J."/>
            <person name="Warry G.L."/>
            <person name="Wei X."/>
            <person name="West A."/>
            <person name="Whitehead S.L."/>
            <person name="Whiteley M.N."/>
            <person name="Wilkinson J.E."/>
            <person name="Willey D.L."/>
            <person name="Williams G."/>
            <person name="Williams L."/>
            <person name="Williamson A."/>
            <person name="Williamson H."/>
            <person name="Wilming L."/>
            <person name="Woodmansey R.L."/>
            <person name="Wray P.W."/>
            <person name="Yen J."/>
            <person name="Zhang J."/>
            <person name="Zhou J."/>
            <person name="Zoghbi H."/>
            <person name="Zorilla S."/>
            <person name="Buck D."/>
            <person name="Reinhardt R."/>
            <person name="Poustka A."/>
            <person name="Rosenthal A."/>
            <person name="Lehrach H."/>
            <person name="Meindl A."/>
            <person name="Minx P.J."/>
            <person name="Hillier L.W."/>
            <person name="Willard H.F."/>
            <person name="Wilson R.K."/>
            <person name="Waterston R.H."/>
            <person name="Rice C.M."/>
            <person name="Vaudin M."/>
            <person name="Coulson A."/>
            <person name="Nelson D.L."/>
            <person name="Weinstock G."/>
            <person name="Sulston J.E."/>
            <person name="Durbin R.M."/>
            <person name="Hubbard T."/>
            <person name="Gibbs R.A."/>
            <person name="Beck S."/>
            <person name="Rogers J."/>
            <person name="Bentley D.R."/>
        </authorList>
    </citation>
    <scope>NUCLEOTIDE SEQUENCE [LARGE SCALE GENOMIC DNA]</scope>
</reference>
<reference key="2">
    <citation type="journal article" date="2008" name="Tissue Antigens">
        <title>An overview of the GAGE cancer/testis antigen family with the inclusion of newly identified members.</title>
        <authorList>
            <person name="Gjerstorff M.F."/>
            <person name="Ditzel H.J."/>
        </authorList>
    </citation>
    <scope>GAGE FAMILY</scope>
</reference>
<keyword id="KW-1185">Reference proteome</keyword>
<dbReference type="EMBL" id="AF235097">
    <property type="status" value="NOT_ANNOTATED_CDS"/>
    <property type="molecule type" value="Genomic_DNA"/>
</dbReference>
<dbReference type="CCDS" id="CCDS43939.1"/>
<dbReference type="RefSeq" id="NP_001091876.2">
    <property type="nucleotide sequence ID" value="NM_001098406.4"/>
</dbReference>
<dbReference type="STRING" id="9606.ENSP00000409832"/>
<dbReference type="iPTMnet" id="A6NER3"/>
<dbReference type="PhosphoSitePlus" id="A6NER3"/>
<dbReference type="BioMuta" id="GAGE12J"/>
<dbReference type="jPOST" id="A6NER3"/>
<dbReference type="MassIVE" id="A6NER3"/>
<dbReference type="PaxDb" id="9606-ENSP00000409832"/>
<dbReference type="PeptideAtlas" id="A6NER3"/>
<dbReference type="ProteomicsDB" id="1006"/>
<dbReference type="Antibodypedia" id="61440">
    <property type="antibodies" value="28 antibodies from 5 providers"/>
</dbReference>
<dbReference type="Ensembl" id="ENST00000442437.3">
    <property type="protein sequence ID" value="ENSP00000409832.2"/>
    <property type="gene ID" value="ENSG00000224659.3"/>
</dbReference>
<dbReference type="GeneID" id="729396"/>
<dbReference type="KEGG" id="hsa:729396"/>
<dbReference type="MANE-Select" id="ENST00000442437.3">
    <property type="protein sequence ID" value="ENSP00000409832.2"/>
    <property type="RefSeq nucleotide sequence ID" value="NM_001098406.4"/>
    <property type="RefSeq protein sequence ID" value="NP_001091876.2"/>
</dbReference>
<dbReference type="UCSC" id="uc033edf.2">
    <property type="organism name" value="human"/>
</dbReference>
<dbReference type="AGR" id="HGNC:17778"/>
<dbReference type="CTD" id="729396"/>
<dbReference type="GeneCards" id="GAGE12J"/>
<dbReference type="HGNC" id="HGNC:17778">
    <property type="gene designation" value="GAGE12J"/>
</dbReference>
<dbReference type="HPA" id="ENSG00000224659">
    <property type="expression patterns" value="Tissue enriched (testis)"/>
</dbReference>
<dbReference type="MIM" id="300733">
    <property type="type" value="gene"/>
</dbReference>
<dbReference type="neXtProt" id="NX_A6NER3"/>
<dbReference type="PharmGKB" id="PA162389200"/>
<dbReference type="VEuPathDB" id="HostDB:ENSG00000224659"/>
<dbReference type="eggNOG" id="ENOG502SZ68">
    <property type="taxonomic scope" value="Eukaryota"/>
</dbReference>
<dbReference type="GeneTree" id="ENSGT00940000153097"/>
<dbReference type="HOGENOM" id="CLU_150116_0_0_1"/>
<dbReference type="InParanoid" id="A6NER3"/>
<dbReference type="OMA" id="PDVQEMG"/>
<dbReference type="OrthoDB" id="9539459at2759"/>
<dbReference type="PAN-GO" id="A6NER3">
    <property type="GO annotations" value="0 GO annotations based on evolutionary models"/>
</dbReference>
<dbReference type="PhylomeDB" id="A6NER3"/>
<dbReference type="TreeFam" id="TF340669"/>
<dbReference type="PathwayCommons" id="A6NER3"/>
<dbReference type="SignaLink" id="A6NER3"/>
<dbReference type="Pharos" id="A6NER3">
    <property type="development level" value="Tdark"/>
</dbReference>
<dbReference type="PRO" id="PR:A6NER3"/>
<dbReference type="Proteomes" id="UP000005640">
    <property type="component" value="Chromosome X"/>
</dbReference>
<dbReference type="RNAct" id="A6NER3">
    <property type="molecule type" value="protein"/>
</dbReference>
<dbReference type="Bgee" id="ENSG00000224659">
    <property type="expression patterns" value="Expressed in male germ line stem cell (sensu Vertebrata) in testis and 76 other cell types or tissues"/>
</dbReference>
<dbReference type="InterPro" id="IPR031320">
    <property type="entry name" value="GAGE"/>
</dbReference>
<dbReference type="InterPro" id="IPR008625">
    <property type="entry name" value="GAGE_fam"/>
</dbReference>
<dbReference type="PANTHER" id="PTHR14047:SF30">
    <property type="entry name" value="G ANTIGEN 1-RELATED"/>
    <property type="match status" value="1"/>
</dbReference>
<dbReference type="PANTHER" id="PTHR14047">
    <property type="entry name" value="P ANTIGEN FAMILY MEMBER 5-RELATED"/>
    <property type="match status" value="1"/>
</dbReference>
<dbReference type="Pfam" id="PF05831">
    <property type="entry name" value="GAGE"/>
    <property type="match status" value="1"/>
</dbReference>
<dbReference type="SMART" id="SM01379">
    <property type="entry name" value="GAGE"/>
    <property type="match status" value="1"/>
</dbReference>
<evidence type="ECO:0000256" key="1">
    <source>
        <dbReference type="SAM" id="MobiDB-lite"/>
    </source>
</evidence>
<evidence type="ECO:0000305" key="2"/>
<feature type="chain" id="PRO_0000339405" description="G antigen 12J">
    <location>
        <begin position="1"/>
        <end position="117"/>
    </location>
</feature>
<feature type="region of interest" description="Disordered" evidence="1">
    <location>
        <begin position="1"/>
        <end position="117"/>
    </location>
</feature>
<feature type="compositionally biased region" description="Acidic residues" evidence="1">
    <location>
        <begin position="32"/>
        <end position="45"/>
    </location>
</feature>
<feature type="compositionally biased region" description="Acidic residues" evidence="1">
    <location>
        <begin position="87"/>
        <end position="96"/>
    </location>
</feature>
<feature type="compositionally biased region" description="Basic and acidic residues" evidence="1">
    <location>
        <begin position="103"/>
        <end position="117"/>
    </location>
</feature>
<feature type="sequence variant" id="VAR_037385" description="In dbSNP:rs7064096.">
    <original>Y</original>
    <variation>C</variation>
    <location>
        <position position="9"/>
    </location>
</feature>
<feature type="sequence variant" id="VAR_037386" description="In dbSNP:rs7064105.">
    <original>R</original>
    <variation>S</variation>
    <location>
        <position position="13"/>
    </location>
</feature>
<feature type="sequence variant" id="VAR_037387" description="In dbSNP:rs6520418.">
    <original>P</original>
    <variation>R</variation>
    <location>
        <position position="16"/>
    </location>
</feature>
<feature type="sequence variant" id="VAR_043979" description="In dbSNP:rs7064530.">
    <original>R</original>
    <variation>Q</variation>
    <location>
        <position position="28"/>
    </location>
</feature>
<feature type="sequence variant" id="VAR_087982" description="In dbSNP:rs1373158842.">
    <original>E</original>
    <variation>K</variation>
    <location>
        <position position="112"/>
    </location>
</feature>
<proteinExistence type="inferred from homology"/>
<sequence length="117" mass="12897">MSWRGRSTYYWPRPRPYVQPPEMIGPMRPEQFSDEVEPATPEEGEPATQRQDPAAAQEGEDEGASAGQGPKPEADSQEQGHPQTGCECEDGPDGQEMDPPNPEEVKTPEEGEKQSQC</sequence>